<keyword id="KW-0414">Isoprene biosynthesis</keyword>
<keyword id="KW-0460">Magnesium</keyword>
<keyword id="KW-0479">Metal-binding</keyword>
<keyword id="KW-1185">Reference proteome</keyword>
<keyword id="KW-0784">Thiamine biosynthesis</keyword>
<keyword id="KW-0786">Thiamine pyrophosphate</keyword>
<keyword id="KW-0808">Transferase</keyword>
<sequence length="620" mass="67459">MTLDSSKYPLLNLVNEPAHLRDLAQDKLPAFSHELRDYLLNSVSQSSGHLASGLGTVELTVALHYVYNTPDDRLVWDVGHQAYPHKILTGRRDLMHTIRKKDGLHPFPFREESQYDTFSVGHSSTSISAALGMSIAAQKEGKGRKTVAVIGDGAITAGMAFEAMNHLGDVKSDMLIILNDNEMSISENVGALTNHFARILSGSFYTNIREGSKKLLSGVPPVKQLASKMEEHIKGMMIPGTFFEELGLNYIGPIDGHDVNMLVDTLRNMRNLKGPQLLHIKTQKGKGYKPAEADPIGYHGVPKFDPNTSSLPKSKPGAATFSNVFGDWLCDIAKQDSKLMAITPAMREGSGMVRFSKEHPDQYFDVAIAEQHAVTLAAGFACEGLKPVVAIYSSFLQRAYDQLIHDVALQNLPVLFAIDRAGIVGADGETHQGAYDLSFMRCIPNMVIMAPSDTNECRHMLYTGYQANCPVAVRYPRGSAGTAEIATNMQLLEIGKADVVKQGAKVAILSFGTLLENAQLAADELNATLVNMRFIKPLDTALLDELINSHDVIVTLEDNAISGGAGSAVNEYLATQKAQVSILNLGIPDEFIKHGTQDEMHDEMGLGEQGILTAIKAFIN</sequence>
<organism>
    <name type="scientific">Pseudoalteromonas translucida (strain TAC 125)</name>
    <dbReference type="NCBI Taxonomy" id="326442"/>
    <lineage>
        <taxon>Bacteria</taxon>
        <taxon>Pseudomonadati</taxon>
        <taxon>Pseudomonadota</taxon>
        <taxon>Gammaproteobacteria</taxon>
        <taxon>Alteromonadales</taxon>
        <taxon>Pseudoalteromonadaceae</taxon>
        <taxon>Pseudoalteromonas</taxon>
    </lineage>
</organism>
<accession>Q3II09</accession>
<evidence type="ECO:0000255" key="1">
    <source>
        <dbReference type="HAMAP-Rule" id="MF_00315"/>
    </source>
</evidence>
<comment type="function">
    <text evidence="1">Catalyzes the acyloin condensation reaction between C atoms 2 and 3 of pyruvate and glyceraldehyde 3-phosphate to yield 1-deoxy-D-xylulose-5-phosphate (DXP).</text>
</comment>
<comment type="catalytic activity">
    <reaction evidence="1">
        <text>D-glyceraldehyde 3-phosphate + pyruvate + H(+) = 1-deoxy-D-xylulose 5-phosphate + CO2</text>
        <dbReference type="Rhea" id="RHEA:12605"/>
        <dbReference type="ChEBI" id="CHEBI:15361"/>
        <dbReference type="ChEBI" id="CHEBI:15378"/>
        <dbReference type="ChEBI" id="CHEBI:16526"/>
        <dbReference type="ChEBI" id="CHEBI:57792"/>
        <dbReference type="ChEBI" id="CHEBI:59776"/>
        <dbReference type="EC" id="2.2.1.7"/>
    </reaction>
</comment>
<comment type="cofactor">
    <cofactor evidence="1">
        <name>Mg(2+)</name>
        <dbReference type="ChEBI" id="CHEBI:18420"/>
    </cofactor>
    <text evidence="1">Binds 1 Mg(2+) ion per subunit.</text>
</comment>
<comment type="cofactor">
    <cofactor evidence="1">
        <name>thiamine diphosphate</name>
        <dbReference type="ChEBI" id="CHEBI:58937"/>
    </cofactor>
    <text evidence="1">Binds 1 thiamine pyrophosphate per subunit.</text>
</comment>
<comment type="pathway">
    <text evidence="1">Metabolic intermediate biosynthesis; 1-deoxy-D-xylulose 5-phosphate biosynthesis; 1-deoxy-D-xylulose 5-phosphate from D-glyceraldehyde 3-phosphate and pyruvate: step 1/1.</text>
</comment>
<comment type="subunit">
    <text evidence="1">Homodimer.</text>
</comment>
<comment type="similarity">
    <text evidence="1">Belongs to the transketolase family. DXPS subfamily.</text>
</comment>
<proteinExistence type="inferred from homology"/>
<name>DXS_PSET1</name>
<gene>
    <name evidence="1" type="primary">dxs</name>
    <name type="ordered locus">PSHAa2366</name>
</gene>
<reference key="1">
    <citation type="journal article" date="2005" name="Genome Res.">
        <title>Coping with cold: the genome of the versatile marine Antarctica bacterium Pseudoalteromonas haloplanktis TAC125.</title>
        <authorList>
            <person name="Medigue C."/>
            <person name="Krin E."/>
            <person name="Pascal G."/>
            <person name="Barbe V."/>
            <person name="Bernsel A."/>
            <person name="Bertin P.N."/>
            <person name="Cheung F."/>
            <person name="Cruveiller S."/>
            <person name="D'Amico S."/>
            <person name="Duilio A."/>
            <person name="Fang G."/>
            <person name="Feller G."/>
            <person name="Ho C."/>
            <person name="Mangenot S."/>
            <person name="Marino G."/>
            <person name="Nilsson J."/>
            <person name="Parrilli E."/>
            <person name="Rocha E.P.C."/>
            <person name="Rouy Z."/>
            <person name="Sekowska A."/>
            <person name="Tutino M.L."/>
            <person name="Vallenet D."/>
            <person name="von Heijne G."/>
            <person name="Danchin A."/>
        </authorList>
    </citation>
    <scope>NUCLEOTIDE SEQUENCE [LARGE SCALE GENOMIC DNA]</scope>
    <source>
        <strain>TAC 125</strain>
    </source>
</reference>
<protein>
    <recommendedName>
        <fullName evidence="1">1-deoxy-D-xylulose-5-phosphate synthase</fullName>
        <ecNumber evidence="1">2.2.1.7</ecNumber>
    </recommendedName>
    <alternativeName>
        <fullName evidence="1">1-deoxyxylulose-5-phosphate synthase</fullName>
        <shortName evidence="1">DXP synthase</shortName>
        <shortName evidence="1">DXPS</shortName>
    </alternativeName>
</protein>
<feature type="chain" id="PRO_0000256460" description="1-deoxy-D-xylulose-5-phosphate synthase">
    <location>
        <begin position="1"/>
        <end position="620"/>
    </location>
</feature>
<feature type="binding site" evidence="1">
    <location>
        <position position="80"/>
    </location>
    <ligand>
        <name>thiamine diphosphate</name>
        <dbReference type="ChEBI" id="CHEBI:58937"/>
    </ligand>
</feature>
<feature type="binding site" evidence="1">
    <location>
        <begin position="121"/>
        <end position="123"/>
    </location>
    <ligand>
        <name>thiamine diphosphate</name>
        <dbReference type="ChEBI" id="CHEBI:58937"/>
    </ligand>
</feature>
<feature type="binding site" evidence="1">
    <location>
        <position position="152"/>
    </location>
    <ligand>
        <name>Mg(2+)</name>
        <dbReference type="ChEBI" id="CHEBI:18420"/>
    </ligand>
</feature>
<feature type="binding site" evidence="1">
    <location>
        <begin position="153"/>
        <end position="154"/>
    </location>
    <ligand>
        <name>thiamine diphosphate</name>
        <dbReference type="ChEBI" id="CHEBI:58937"/>
    </ligand>
</feature>
<feature type="binding site" evidence="1">
    <location>
        <position position="181"/>
    </location>
    <ligand>
        <name>Mg(2+)</name>
        <dbReference type="ChEBI" id="CHEBI:18420"/>
    </ligand>
</feature>
<feature type="binding site" evidence="1">
    <location>
        <position position="181"/>
    </location>
    <ligand>
        <name>thiamine diphosphate</name>
        <dbReference type="ChEBI" id="CHEBI:58937"/>
    </ligand>
</feature>
<feature type="binding site" evidence="1">
    <location>
        <position position="288"/>
    </location>
    <ligand>
        <name>thiamine diphosphate</name>
        <dbReference type="ChEBI" id="CHEBI:58937"/>
    </ligand>
</feature>
<feature type="binding site" evidence="1">
    <location>
        <position position="370"/>
    </location>
    <ligand>
        <name>thiamine diphosphate</name>
        <dbReference type="ChEBI" id="CHEBI:58937"/>
    </ligand>
</feature>
<dbReference type="EC" id="2.2.1.7" evidence="1"/>
<dbReference type="EMBL" id="CR954246">
    <property type="protein sequence ID" value="CAI87415.1"/>
    <property type="molecule type" value="Genomic_DNA"/>
</dbReference>
<dbReference type="SMR" id="Q3II09"/>
<dbReference type="STRING" id="326442.PSHAa2366"/>
<dbReference type="KEGG" id="pha:PSHAa2366"/>
<dbReference type="PATRIC" id="fig|326442.8.peg.2279"/>
<dbReference type="eggNOG" id="COG1154">
    <property type="taxonomic scope" value="Bacteria"/>
</dbReference>
<dbReference type="HOGENOM" id="CLU_009227_1_4_6"/>
<dbReference type="BioCyc" id="PHAL326442:PSHA_RS11655-MONOMER"/>
<dbReference type="UniPathway" id="UPA00064">
    <property type="reaction ID" value="UER00091"/>
</dbReference>
<dbReference type="Proteomes" id="UP000006843">
    <property type="component" value="Chromosome I"/>
</dbReference>
<dbReference type="GO" id="GO:0005829">
    <property type="term" value="C:cytosol"/>
    <property type="evidence" value="ECO:0007669"/>
    <property type="project" value="TreeGrafter"/>
</dbReference>
<dbReference type="GO" id="GO:0008661">
    <property type="term" value="F:1-deoxy-D-xylulose-5-phosphate synthase activity"/>
    <property type="evidence" value="ECO:0007669"/>
    <property type="project" value="UniProtKB-UniRule"/>
</dbReference>
<dbReference type="GO" id="GO:0000287">
    <property type="term" value="F:magnesium ion binding"/>
    <property type="evidence" value="ECO:0007669"/>
    <property type="project" value="UniProtKB-UniRule"/>
</dbReference>
<dbReference type="GO" id="GO:0030976">
    <property type="term" value="F:thiamine pyrophosphate binding"/>
    <property type="evidence" value="ECO:0007669"/>
    <property type="project" value="UniProtKB-UniRule"/>
</dbReference>
<dbReference type="GO" id="GO:0052865">
    <property type="term" value="P:1-deoxy-D-xylulose 5-phosphate biosynthetic process"/>
    <property type="evidence" value="ECO:0007669"/>
    <property type="project" value="UniProtKB-UniPathway"/>
</dbReference>
<dbReference type="GO" id="GO:0019288">
    <property type="term" value="P:isopentenyl diphosphate biosynthetic process, methylerythritol 4-phosphate pathway"/>
    <property type="evidence" value="ECO:0007669"/>
    <property type="project" value="TreeGrafter"/>
</dbReference>
<dbReference type="GO" id="GO:0016114">
    <property type="term" value="P:terpenoid biosynthetic process"/>
    <property type="evidence" value="ECO:0007669"/>
    <property type="project" value="UniProtKB-UniRule"/>
</dbReference>
<dbReference type="GO" id="GO:0009228">
    <property type="term" value="P:thiamine biosynthetic process"/>
    <property type="evidence" value="ECO:0007669"/>
    <property type="project" value="UniProtKB-UniRule"/>
</dbReference>
<dbReference type="CDD" id="cd02007">
    <property type="entry name" value="TPP_DXS"/>
    <property type="match status" value="1"/>
</dbReference>
<dbReference type="CDD" id="cd07033">
    <property type="entry name" value="TPP_PYR_DXS_TK_like"/>
    <property type="match status" value="1"/>
</dbReference>
<dbReference type="FunFam" id="3.40.50.920:FF:000002">
    <property type="entry name" value="1-deoxy-D-xylulose-5-phosphate synthase"/>
    <property type="match status" value="1"/>
</dbReference>
<dbReference type="FunFam" id="3.40.50.970:FF:000005">
    <property type="entry name" value="1-deoxy-D-xylulose-5-phosphate synthase"/>
    <property type="match status" value="1"/>
</dbReference>
<dbReference type="Gene3D" id="3.40.50.920">
    <property type="match status" value="1"/>
</dbReference>
<dbReference type="Gene3D" id="3.40.50.970">
    <property type="match status" value="2"/>
</dbReference>
<dbReference type="HAMAP" id="MF_00315">
    <property type="entry name" value="DXP_synth"/>
    <property type="match status" value="1"/>
</dbReference>
<dbReference type="InterPro" id="IPR005477">
    <property type="entry name" value="Dxylulose-5-P_synthase"/>
</dbReference>
<dbReference type="InterPro" id="IPR029061">
    <property type="entry name" value="THDP-binding"/>
</dbReference>
<dbReference type="InterPro" id="IPR009014">
    <property type="entry name" value="Transketo_C/PFOR_II"/>
</dbReference>
<dbReference type="InterPro" id="IPR005475">
    <property type="entry name" value="Transketolase-like_Pyr-bd"/>
</dbReference>
<dbReference type="InterPro" id="IPR020826">
    <property type="entry name" value="Transketolase_BS"/>
</dbReference>
<dbReference type="InterPro" id="IPR033248">
    <property type="entry name" value="Transketolase_C"/>
</dbReference>
<dbReference type="InterPro" id="IPR049557">
    <property type="entry name" value="Transketolase_CS"/>
</dbReference>
<dbReference type="NCBIfam" id="TIGR00204">
    <property type="entry name" value="dxs"/>
    <property type="match status" value="1"/>
</dbReference>
<dbReference type="NCBIfam" id="NF003933">
    <property type="entry name" value="PRK05444.2-2"/>
    <property type="match status" value="1"/>
</dbReference>
<dbReference type="PANTHER" id="PTHR43322">
    <property type="entry name" value="1-D-DEOXYXYLULOSE 5-PHOSPHATE SYNTHASE-RELATED"/>
    <property type="match status" value="1"/>
</dbReference>
<dbReference type="PANTHER" id="PTHR43322:SF5">
    <property type="entry name" value="1-DEOXY-D-XYLULOSE-5-PHOSPHATE SYNTHASE, CHLOROPLASTIC"/>
    <property type="match status" value="1"/>
</dbReference>
<dbReference type="Pfam" id="PF13292">
    <property type="entry name" value="DXP_synthase_N"/>
    <property type="match status" value="1"/>
</dbReference>
<dbReference type="Pfam" id="PF02779">
    <property type="entry name" value="Transket_pyr"/>
    <property type="match status" value="1"/>
</dbReference>
<dbReference type="Pfam" id="PF02780">
    <property type="entry name" value="Transketolase_C"/>
    <property type="match status" value="1"/>
</dbReference>
<dbReference type="SMART" id="SM00861">
    <property type="entry name" value="Transket_pyr"/>
    <property type="match status" value="1"/>
</dbReference>
<dbReference type="SUPFAM" id="SSF52518">
    <property type="entry name" value="Thiamin diphosphate-binding fold (THDP-binding)"/>
    <property type="match status" value="2"/>
</dbReference>
<dbReference type="SUPFAM" id="SSF52922">
    <property type="entry name" value="TK C-terminal domain-like"/>
    <property type="match status" value="1"/>
</dbReference>
<dbReference type="PROSITE" id="PS00801">
    <property type="entry name" value="TRANSKETOLASE_1"/>
    <property type="match status" value="1"/>
</dbReference>
<dbReference type="PROSITE" id="PS00802">
    <property type="entry name" value="TRANSKETOLASE_2"/>
    <property type="match status" value="1"/>
</dbReference>